<name>P5CR_PASMU</name>
<organism>
    <name type="scientific">Pasteurella multocida (strain Pm70)</name>
    <dbReference type="NCBI Taxonomy" id="272843"/>
    <lineage>
        <taxon>Bacteria</taxon>
        <taxon>Pseudomonadati</taxon>
        <taxon>Pseudomonadota</taxon>
        <taxon>Gammaproteobacteria</taxon>
        <taxon>Pasteurellales</taxon>
        <taxon>Pasteurellaceae</taxon>
        <taxon>Pasteurella</taxon>
    </lineage>
</organism>
<sequence length="275" mass="29556">MQAKSICFIGGGNMAQAIIFGLLKQGYPANQITVSDPNAAKRQCLAEKGVNTVEASQTDTQDAVETSEVLLLAVKPQMIAAVCQGLSAVDFSQKLVISIAAGVSVTKLQSRLPTAKQIVRVMPNTPALVAEGMSGLFAQNSLKPEYKQFTQDLLNAVGKTCWVTQEADMHTITAGSGSSPAYFFLFMEAMQQALCQMNMDEDTARLLVQQSALGAAKMVIENPDLPIATLRENVTSKGGTTAAALQVLNQQQLQHIVQQAMQACVERSQQMEKLF</sequence>
<dbReference type="EC" id="1.5.1.2" evidence="1"/>
<dbReference type="EMBL" id="AE004439">
    <property type="protein sequence ID" value="AAK02179.1"/>
    <property type="molecule type" value="Genomic_DNA"/>
</dbReference>
<dbReference type="RefSeq" id="WP_010906479.1">
    <property type="nucleotide sequence ID" value="NC_002663.1"/>
</dbReference>
<dbReference type="SMR" id="Q9CPE8"/>
<dbReference type="STRING" id="272843.PM0095"/>
<dbReference type="EnsemblBacteria" id="AAK02179">
    <property type="protein sequence ID" value="AAK02179"/>
    <property type="gene ID" value="PM0095"/>
</dbReference>
<dbReference type="KEGG" id="pmu:PM0095"/>
<dbReference type="PATRIC" id="fig|272843.6.peg.98"/>
<dbReference type="HOGENOM" id="CLU_042344_0_1_6"/>
<dbReference type="OrthoDB" id="9805754at2"/>
<dbReference type="UniPathway" id="UPA00098">
    <property type="reaction ID" value="UER00361"/>
</dbReference>
<dbReference type="Proteomes" id="UP000000809">
    <property type="component" value="Chromosome"/>
</dbReference>
<dbReference type="GO" id="GO:0005737">
    <property type="term" value="C:cytoplasm"/>
    <property type="evidence" value="ECO:0007669"/>
    <property type="project" value="UniProtKB-SubCell"/>
</dbReference>
<dbReference type="GO" id="GO:0004735">
    <property type="term" value="F:pyrroline-5-carboxylate reductase activity"/>
    <property type="evidence" value="ECO:0007669"/>
    <property type="project" value="UniProtKB-UniRule"/>
</dbReference>
<dbReference type="GO" id="GO:0055129">
    <property type="term" value="P:L-proline biosynthetic process"/>
    <property type="evidence" value="ECO:0007669"/>
    <property type="project" value="UniProtKB-UniRule"/>
</dbReference>
<dbReference type="FunFam" id="1.10.3730.10:FF:000001">
    <property type="entry name" value="Pyrroline-5-carboxylate reductase"/>
    <property type="match status" value="1"/>
</dbReference>
<dbReference type="FunFam" id="3.40.50.720:FF:000105">
    <property type="entry name" value="Pyrroline-5-carboxylate reductase"/>
    <property type="match status" value="1"/>
</dbReference>
<dbReference type="Gene3D" id="3.40.50.720">
    <property type="entry name" value="NAD(P)-binding Rossmann-like Domain"/>
    <property type="match status" value="1"/>
</dbReference>
<dbReference type="Gene3D" id="1.10.3730.10">
    <property type="entry name" value="ProC C-terminal domain-like"/>
    <property type="match status" value="1"/>
</dbReference>
<dbReference type="HAMAP" id="MF_01925">
    <property type="entry name" value="P5C_reductase"/>
    <property type="match status" value="1"/>
</dbReference>
<dbReference type="InterPro" id="IPR008927">
    <property type="entry name" value="6-PGluconate_DH-like_C_sf"/>
</dbReference>
<dbReference type="InterPro" id="IPR036291">
    <property type="entry name" value="NAD(P)-bd_dom_sf"/>
</dbReference>
<dbReference type="InterPro" id="IPR028939">
    <property type="entry name" value="P5C_Rdtase_cat_N"/>
</dbReference>
<dbReference type="InterPro" id="IPR053790">
    <property type="entry name" value="P5CR-like_CS"/>
</dbReference>
<dbReference type="InterPro" id="IPR029036">
    <property type="entry name" value="P5CR_dimer"/>
</dbReference>
<dbReference type="InterPro" id="IPR000304">
    <property type="entry name" value="Pyrroline-COOH_reductase"/>
</dbReference>
<dbReference type="NCBIfam" id="TIGR00112">
    <property type="entry name" value="proC"/>
    <property type="match status" value="1"/>
</dbReference>
<dbReference type="PANTHER" id="PTHR11645">
    <property type="entry name" value="PYRROLINE-5-CARBOXYLATE REDUCTASE"/>
    <property type="match status" value="1"/>
</dbReference>
<dbReference type="PANTHER" id="PTHR11645:SF0">
    <property type="entry name" value="PYRROLINE-5-CARBOXYLATE REDUCTASE 3"/>
    <property type="match status" value="1"/>
</dbReference>
<dbReference type="Pfam" id="PF03807">
    <property type="entry name" value="F420_oxidored"/>
    <property type="match status" value="1"/>
</dbReference>
<dbReference type="Pfam" id="PF14748">
    <property type="entry name" value="P5CR_dimer"/>
    <property type="match status" value="1"/>
</dbReference>
<dbReference type="PIRSF" id="PIRSF000193">
    <property type="entry name" value="Pyrrol-5-carb_rd"/>
    <property type="match status" value="1"/>
</dbReference>
<dbReference type="SUPFAM" id="SSF48179">
    <property type="entry name" value="6-phosphogluconate dehydrogenase C-terminal domain-like"/>
    <property type="match status" value="1"/>
</dbReference>
<dbReference type="SUPFAM" id="SSF51735">
    <property type="entry name" value="NAD(P)-binding Rossmann-fold domains"/>
    <property type="match status" value="1"/>
</dbReference>
<dbReference type="PROSITE" id="PS00521">
    <property type="entry name" value="P5CR"/>
    <property type="match status" value="1"/>
</dbReference>
<comment type="function">
    <text evidence="1">Catalyzes the reduction of 1-pyrroline-5-carboxylate (PCA) to L-proline.</text>
</comment>
<comment type="catalytic activity">
    <reaction evidence="1">
        <text>L-proline + NADP(+) = (S)-1-pyrroline-5-carboxylate + NADPH + 2 H(+)</text>
        <dbReference type="Rhea" id="RHEA:14109"/>
        <dbReference type="ChEBI" id="CHEBI:15378"/>
        <dbReference type="ChEBI" id="CHEBI:17388"/>
        <dbReference type="ChEBI" id="CHEBI:57783"/>
        <dbReference type="ChEBI" id="CHEBI:58349"/>
        <dbReference type="ChEBI" id="CHEBI:60039"/>
        <dbReference type="EC" id="1.5.1.2"/>
    </reaction>
</comment>
<comment type="catalytic activity">
    <reaction evidence="1">
        <text>L-proline + NAD(+) = (S)-1-pyrroline-5-carboxylate + NADH + 2 H(+)</text>
        <dbReference type="Rhea" id="RHEA:14105"/>
        <dbReference type="ChEBI" id="CHEBI:15378"/>
        <dbReference type="ChEBI" id="CHEBI:17388"/>
        <dbReference type="ChEBI" id="CHEBI:57540"/>
        <dbReference type="ChEBI" id="CHEBI:57945"/>
        <dbReference type="ChEBI" id="CHEBI:60039"/>
        <dbReference type="EC" id="1.5.1.2"/>
    </reaction>
</comment>
<comment type="pathway">
    <text evidence="1">Amino-acid biosynthesis; L-proline biosynthesis; L-proline from L-glutamate 5-semialdehyde: step 1/1.</text>
</comment>
<comment type="subcellular location">
    <subcellularLocation>
        <location evidence="1">Cytoplasm</location>
    </subcellularLocation>
</comment>
<comment type="similarity">
    <text evidence="1">Belongs to the pyrroline-5-carboxylate reductase family.</text>
</comment>
<proteinExistence type="inferred from homology"/>
<keyword id="KW-0028">Amino-acid biosynthesis</keyword>
<keyword id="KW-0963">Cytoplasm</keyword>
<keyword id="KW-0521">NADP</keyword>
<keyword id="KW-0560">Oxidoreductase</keyword>
<keyword id="KW-0641">Proline biosynthesis</keyword>
<keyword id="KW-1185">Reference proteome</keyword>
<protein>
    <recommendedName>
        <fullName evidence="1">Pyrroline-5-carboxylate reductase</fullName>
        <shortName evidence="1">P5C reductase</shortName>
        <shortName evidence="1">P5CR</shortName>
        <ecNumber evidence="1">1.5.1.2</ecNumber>
    </recommendedName>
    <alternativeName>
        <fullName evidence="1">PCA reductase</fullName>
    </alternativeName>
</protein>
<accession>Q9CPE8</accession>
<gene>
    <name evidence="1" type="primary">proC</name>
    <name type="ordered locus">PM0095</name>
</gene>
<evidence type="ECO:0000255" key="1">
    <source>
        <dbReference type="HAMAP-Rule" id="MF_01925"/>
    </source>
</evidence>
<reference key="1">
    <citation type="journal article" date="2001" name="Proc. Natl. Acad. Sci. U.S.A.">
        <title>Complete genomic sequence of Pasteurella multocida Pm70.</title>
        <authorList>
            <person name="May B.J."/>
            <person name="Zhang Q."/>
            <person name="Li L.L."/>
            <person name="Paustian M.L."/>
            <person name="Whittam T.S."/>
            <person name="Kapur V."/>
        </authorList>
    </citation>
    <scope>NUCLEOTIDE SEQUENCE [LARGE SCALE GENOMIC DNA]</scope>
    <source>
        <strain>Pm70</strain>
    </source>
</reference>
<feature type="chain" id="PRO_0000187295" description="Pyrroline-5-carboxylate reductase">
    <location>
        <begin position="1"/>
        <end position="275"/>
    </location>
</feature>